<evidence type="ECO:0000250" key="1"/>
<evidence type="ECO:0000305" key="2"/>
<organism>
    <name type="scientific">Pyrococcus furiosus (strain ATCC 43587 / DSM 3638 / JCM 8422 / Vc1)</name>
    <dbReference type="NCBI Taxonomy" id="186497"/>
    <lineage>
        <taxon>Archaea</taxon>
        <taxon>Methanobacteriati</taxon>
        <taxon>Methanobacteriota</taxon>
        <taxon>Thermococci</taxon>
        <taxon>Thermococcales</taxon>
        <taxon>Thermococcaceae</taxon>
        <taxon>Pyrococcus</taxon>
    </lineage>
</organism>
<reference key="1">
    <citation type="journal article" date="1999" name="Genetics">
        <title>Divergence of the hyperthermophilic archaea Pyrococcus furiosus and P. horikoshii inferred from complete genomic sequences.</title>
        <authorList>
            <person name="Maeder D.L."/>
            <person name="Weiss R.B."/>
            <person name="Dunn D.M."/>
            <person name="Cherry J.L."/>
            <person name="Gonzalez J.M."/>
            <person name="DiRuggiero J."/>
            <person name="Robb F.T."/>
        </authorList>
    </citation>
    <scope>NUCLEOTIDE SEQUENCE [LARGE SCALE GENOMIC DNA]</scope>
    <source>
        <strain>ATCC 43587 / DSM 3638 / JCM 8422 / Vc1</strain>
    </source>
</reference>
<protein>
    <recommendedName>
        <fullName>Histidine biosynthesis bifunctional protein HisIE</fullName>
    </recommendedName>
    <domain>
        <recommendedName>
            <fullName>Phosphoribosyl-AMP cyclohydrolase</fullName>
            <shortName>PRA-CH</shortName>
            <ecNumber>3.5.4.19</ecNumber>
        </recommendedName>
    </domain>
    <domain>
        <recommendedName>
            <fullName>Phosphoribosyl-ATP pyrophosphatase</fullName>
            <shortName>PRA-PH</shortName>
            <ecNumber>3.6.1.31</ecNumber>
        </recommendedName>
    </domain>
</protein>
<gene>
    <name type="primary">hisI</name>
    <name type="synonym">hisIE</name>
    <name type="ordered locus">PF1664</name>
</gene>
<keyword id="KW-0028">Amino-acid biosynthesis</keyword>
<keyword id="KW-0067">ATP-binding</keyword>
<keyword id="KW-0963">Cytoplasm</keyword>
<keyword id="KW-0368">Histidine biosynthesis</keyword>
<keyword id="KW-0378">Hydrolase</keyword>
<keyword id="KW-0511">Multifunctional enzyme</keyword>
<keyword id="KW-0547">Nucleotide-binding</keyword>
<keyword id="KW-1185">Reference proteome</keyword>
<comment type="catalytic activity">
    <reaction>
        <text>1-(5-phospho-beta-D-ribosyl)-ATP + H2O = 1-(5-phospho-beta-D-ribosyl)-5'-AMP + diphosphate + H(+)</text>
        <dbReference type="Rhea" id="RHEA:22828"/>
        <dbReference type="ChEBI" id="CHEBI:15377"/>
        <dbReference type="ChEBI" id="CHEBI:15378"/>
        <dbReference type="ChEBI" id="CHEBI:33019"/>
        <dbReference type="ChEBI" id="CHEBI:59457"/>
        <dbReference type="ChEBI" id="CHEBI:73183"/>
        <dbReference type="EC" id="3.6.1.31"/>
    </reaction>
</comment>
<comment type="catalytic activity">
    <reaction>
        <text>1-(5-phospho-beta-D-ribosyl)-5'-AMP + H2O = 1-(5-phospho-beta-D-ribosyl)-5-[(5-phospho-beta-D-ribosylamino)methylideneamino]imidazole-4-carboxamide</text>
        <dbReference type="Rhea" id="RHEA:20049"/>
        <dbReference type="ChEBI" id="CHEBI:15377"/>
        <dbReference type="ChEBI" id="CHEBI:58435"/>
        <dbReference type="ChEBI" id="CHEBI:59457"/>
        <dbReference type="EC" id="3.5.4.19"/>
    </reaction>
</comment>
<comment type="pathway">
    <text>Amino-acid biosynthesis; L-histidine biosynthesis; L-histidine from 5-phospho-alpha-D-ribose 1-diphosphate: step 2/9.</text>
</comment>
<comment type="pathway">
    <text>Amino-acid biosynthesis; L-histidine biosynthesis; L-histidine from 5-phospho-alpha-D-ribose 1-diphosphate: step 3/9.</text>
</comment>
<comment type="subcellular location">
    <subcellularLocation>
        <location evidence="1">Cytoplasm</location>
    </subcellularLocation>
</comment>
<comment type="similarity">
    <text evidence="2">In the N-terminal section; belongs to the PRA-CH family.</text>
</comment>
<comment type="similarity">
    <text evidence="2">In the C-terminal section; belongs to the PRA-PH family.</text>
</comment>
<comment type="sequence caution" evidence="2">
    <conflict type="erroneous initiation">
        <sequence resource="EMBL-CDS" id="AAL81788"/>
    </conflict>
</comment>
<feature type="chain" id="PRO_0000136455" description="Histidine biosynthesis bifunctional protein HisIE">
    <location>
        <begin position="1"/>
        <end position="209"/>
    </location>
</feature>
<feature type="region of interest" description="Phosphoribosyl-AMP cyclohydrolase">
    <location>
        <begin position="1"/>
        <end position="123"/>
    </location>
</feature>
<feature type="region of interest" description="Phosphoribosyl-ATP pyrophosphohydrolase">
    <location>
        <begin position="124"/>
        <end position="209"/>
    </location>
</feature>
<proteinExistence type="inferred from homology"/>
<sequence>MEIEKLLEQVNWEKNNGIVPVIVQDEKGEVLTLAYMNKEALRKTLETGIAHYYSRSKGRIRMKGEVSGNIQTVKEIKIDCDNDALLLIVSPKGPACHTGNYSCFYRKLGEPERVLPIDYSLSILKELEEIIKRRKETPVEGSYTSKLFKEGREKIYKKFGEEAIEVLVAEKRERIIYEVADLLYHLLVLLTYNDISLGEVMNELRRRRK</sequence>
<dbReference type="EC" id="3.5.4.19"/>
<dbReference type="EC" id="3.6.1.31"/>
<dbReference type="EMBL" id="AE009950">
    <property type="protein sequence ID" value="AAL81788.1"/>
    <property type="status" value="ALT_INIT"/>
    <property type="molecule type" value="Genomic_DNA"/>
</dbReference>
<dbReference type="RefSeq" id="WP_014835587.1">
    <property type="nucleotide sequence ID" value="NZ_CP023154.1"/>
</dbReference>
<dbReference type="SMR" id="P58853"/>
<dbReference type="STRING" id="186497.PF1664"/>
<dbReference type="PaxDb" id="186497-PF1664"/>
<dbReference type="DNASU" id="1469541"/>
<dbReference type="GeneID" id="41713492"/>
<dbReference type="KEGG" id="pfu:PF1664"/>
<dbReference type="PATRIC" id="fig|186497.12.peg.1730"/>
<dbReference type="eggNOG" id="arCOG02676">
    <property type="taxonomic scope" value="Archaea"/>
</dbReference>
<dbReference type="HOGENOM" id="CLU_048577_3_1_2"/>
<dbReference type="OrthoDB" id="5853at2157"/>
<dbReference type="PhylomeDB" id="P58853"/>
<dbReference type="UniPathway" id="UPA00031">
    <property type="reaction ID" value="UER00007"/>
</dbReference>
<dbReference type="UniPathway" id="UPA00031">
    <property type="reaction ID" value="UER00008"/>
</dbReference>
<dbReference type="Proteomes" id="UP000001013">
    <property type="component" value="Chromosome"/>
</dbReference>
<dbReference type="GO" id="GO:0005737">
    <property type="term" value="C:cytoplasm"/>
    <property type="evidence" value="ECO:0007669"/>
    <property type="project" value="UniProtKB-SubCell"/>
</dbReference>
<dbReference type="GO" id="GO:0005524">
    <property type="term" value="F:ATP binding"/>
    <property type="evidence" value="ECO:0007669"/>
    <property type="project" value="UniProtKB-KW"/>
</dbReference>
<dbReference type="GO" id="GO:0004635">
    <property type="term" value="F:phosphoribosyl-AMP cyclohydrolase activity"/>
    <property type="evidence" value="ECO:0007669"/>
    <property type="project" value="UniProtKB-UniRule"/>
</dbReference>
<dbReference type="GO" id="GO:0004636">
    <property type="term" value="F:phosphoribosyl-ATP diphosphatase activity"/>
    <property type="evidence" value="ECO:0007669"/>
    <property type="project" value="UniProtKB-UniRule"/>
</dbReference>
<dbReference type="GO" id="GO:0000105">
    <property type="term" value="P:L-histidine biosynthetic process"/>
    <property type="evidence" value="ECO:0007669"/>
    <property type="project" value="UniProtKB-UniRule"/>
</dbReference>
<dbReference type="CDD" id="cd11534">
    <property type="entry name" value="NTP-PPase_HisIE_like"/>
    <property type="match status" value="1"/>
</dbReference>
<dbReference type="FunFam" id="3.10.20.810:FF:000001">
    <property type="entry name" value="Histidine biosynthesis bifunctional protein HisIE"/>
    <property type="match status" value="1"/>
</dbReference>
<dbReference type="Gene3D" id="1.10.287.1080">
    <property type="entry name" value="MazG-like"/>
    <property type="match status" value="1"/>
</dbReference>
<dbReference type="Gene3D" id="3.10.20.810">
    <property type="entry name" value="Phosphoribosyl-AMP cyclohydrolase"/>
    <property type="match status" value="1"/>
</dbReference>
<dbReference type="HAMAP" id="MF_01020">
    <property type="entry name" value="HisE"/>
    <property type="match status" value="1"/>
</dbReference>
<dbReference type="HAMAP" id="MF_01021">
    <property type="entry name" value="HisI"/>
    <property type="match status" value="1"/>
</dbReference>
<dbReference type="HAMAP" id="MF_01019">
    <property type="entry name" value="HisIE"/>
    <property type="match status" value="1"/>
</dbReference>
<dbReference type="InterPro" id="IPR023019">
    <property type="entry name" value="His_synth_HisIE"/>
</dbReference>
<dbReference type="InterPro" id="IPR008179">
    <property type="entry name" value="HisE"/>
</dbReference>
<dbReference type="InterPro" id="IPR026660">
    <property type="entry name" value="PRA-CH"/>
</dbReference>
<dbReference type="InterPro" id="IPR021130">
    <property type="entry name" value="PRib-ATP_PPHydrolase-like"/>
</dbReference>
<dbReference type="InterPro" id="IPR002496">
    <property type="entry name" value="PRib_AMP_CycHydrolase_dom"/>
</dbReference>
<dbReference type="InterPro" id="IPR038019">
    <property type="entry name" value="PRib_AMP_CycHydrolase_sf"/>
</dbReference>
<dbReference type="NCBIfam" id="TIGR03188">
    <property type="entry name" value="histidine_hisI"/>
    <property type="match status" value="1"/>
</dbReference>
<dbReference type="NCBIfam" id="NF000768">
    <property type="entry name" value="PRK00051.1"/>
    <property type="match status" value="1"/>
</dbReference>
<dbReference type="NCBIfam" id="NF002747">
    <property type="entry name" value="PRK02759.1"/>
    <property type="match status" value="1"/>
</dbReference>
<dbReference type="PANTHER" id="PTHR42945">
    <property type="entry name" value="HISTIDINE BIOSYNTHESIS BIFUNCTIONAL PROTEIN"/>
    <property type="match status" value="1"/>
</dbReference>
<dbReference type="PANTHER" id="PTHR42945:SF1">
    <property type="entry name" value="HISTIDINE BIOSYNTHESIS BIFUNCTIONAL PROTEIN HIS7"/>
    <property type="match status" value="1"/>
</dbReference>
<dbReference type="Pfam" id="PF01502">
    <property type="entry name" value="PRA-CH"/>
    <property type="match status" value="1"/>
</dbReference>
<dbReference type="Pfam" id="PF01503">
    <property type="entry name" value="PRA-PH"/>
    <property type="match status" value="1"/>
</dbReference>
<dbReference type="SUPFAM" id="SSF101386">
    <property type="entry name" value="all-alpha NTP pyrophosphatases"/>
    <property type="match status" value="1"/>
</dbReference>
<dbReference type="SUPFAM" id="SSF141734">
    <property type="entry name" value="HisI-like"/>
    <property type="match status" value="1"/>
</dbReference>
<accession>P58853</accession>
<name>HIS2_PYRFU</name>